<reference key="1">
    <citation type="submission" date="2007-10" db="EMBL/GenBank/DDBJ databases">
        <title>Complete sequence of Shewanella pealeana ATCC 700345.</title>
        <authorList>
            <consortium name="US DOE Joint Genome Institute"/>
            <person name="Copeland A."/>
            <person name="Lucas S."/>
            <person name="Lapidus A."/>
            <person name="Barry K."/>
            <person name="Glavina del Rio T."/>
            <person name="Dalin E."/>
            <person name="Tice H."/>
            <person name="Pitluck S."/>
            <person name="Chertkov O."/>
            <person name="Brettin T."/>
            <person name="Bruce D."/>
            <person name="Detter J.C."/>
            <person name="Han C."/>
            <person name="Schmutz J."/>
            <person name="Larimer F."/>
            <person name="Land M."/>
            <person name="Hauser L."/>
            <person name="Kyrpides N."/>
            <person name="Kim E."/>
            <person name="Zhao J.-S.Z."/>
            <person name="Manno D."/>
            <person name="Hawari J."/>
            <person name="Richardson P."/>
        </authorList>
    </citation>
    <scope>NUCLEOTIDE SEQUENCE [LARGE SCALE GENOMIC DNA]</scope>
    <source>
        <strain>ATCC 700345 / ANG-SQ1</strain>
    </source>
</reference>
<keyword id="KW-0028">Amino-acid biosynthesis</keyword>
<keyword id="KW-0055">Arginine biosynthesis</keyword>
<keyword id="KW-0963">Cytoplasm</keyword>
<keyword id="KW-0521">NADP</keyword>
<keyword id="KW-0560">Oxidoreductase</keyword>
<keyword id="KW-1185">Reference proteome</keyword>
<comment type="function">
    <text evidence="1">Catalyzes the NADPH-dependent reduction of N-acetyl-5-glutamyl phosphate to yield N-acetyl-L-glutamate 5-semialdehyde.</text>
</comment>
<comment type="catalytic activity">
    <reaction evidence="1">
        <text>N-acetyl-L-glutamate 5-semialdehyde + phosphate + NADP(+) = N-acetyl-L-glutamyl 5-phosphate + NADPH + H(+)</text>
        <dbReference type="Rhea" id="RHEA:21588"/>
        <dbReference type="ChEBI" id="CHEBI:15378"/>
        <dbReference type="ChEBI" id="CHEBI:29123"/>
        <dbReference type="ChEBI" id="CHEBI:43474"/>
        <dbReference type="ChEBI" id="CHEBI:57783"/>
        <dbReference type="ChEBI" id="CHEBI:57936"/>
        <dbReference type="ChEBI" id="CHEBI:58349"/>
        <dbReference type="EC" id="1.2.1.38"/>
    </reaction>
</comment>
<comment type="pathway">
    <text evidence="1">Amino-acid biosynthesis; L-arginine biosynthesis; N(2)-acetyl-L-ornithine from L-glutamate: step 3/4.</text>
</comment>
<comment type="subcellular location">
    <subcellularLocation>
        <location evidence="1">Cytoplasm</location>
    </subcellularLocation>
</comment>
<comment type="similarity">
    <text evidence="1">Belongs to the NAGSA dehydrogenase family. Type 1 subfamily.</text>
</comment>
<accession>A8GZ18</accession>
<sequence>MKNIAIIGASGYTGAQITSLINAEANLSIQGLYVSESSLDKGKPLSELYPAYSHISLCLNPLSEDAKQTIVATADAVVLATDHAVSLHLAAWFYQQGLAVFDLSGAYRFSDVAQYPKWYGFTHEYPQVLADAVYGLAEWNSDQIAATKMIAVPGCYPTASLIALKPLSHLLTDVLPVINAVSGVTGAGRKAQLHTSFCEVSLTPYGVLAHRHQPEIATQLGQEVIFTPHLGNFKRGILATITVKLKPGTTLSDIQQAYQCYDSAELVTVKQNQFPKVDDVVQTPHCHLGWKFDEQTGYLVVASAIDNLMKGAASQALQCIKIHFGESVK</sequence>
<feature type="chain" id="PRO_1000076745" description="N-acetyl-gamma-glutamyl-phosphate reductase">
    <location>
        <begin position="1"/>
        <end position="329"/>
    </location>
</feature>
<feature type="active site" evidence="1">
    <location>
        <position position="155"/>
    </location>
</feature>
<dbReference type="EC" id="1.2.1.38" evidence="1"/>
<dbReference type="EMBL" id="CP000851">
    <property type="protein sequence ID" value="ABV85555.1"/>
    <property type="molecule type" value="Genomic_DNA"/>
</dbReference>
<dbReference type="RefSeq" id="WP_012153496.1">
    <property type="nucleotide sequence ID" value="NC_009901.1"/>
</dbReference>
<dbReference type="SMR" id="A8GZ18"/>
<dbReference type="STRING" id="398579.Spea_0227"/>
<dbReference type="KEGG" id="spl:Spea_0227"/>
<dbReference type="eggNOG" id="COG0002">
    <property type="taxonomic scope" value="Bacteria"/>
</dbReference>
<dbReference type="HOGENOM" id="CLU_006384_0_1_6"/>
<dbReference type="OrthoDB" id="9801289at2"/>
<dbReference type="UniPathway" id="UPA00068">
    <property type="reaction ID" value="UER00108"/>
</dbReference>
<dbReference type="Proteomes" id="UP000002608">
    <property type="component" value="Chromosome"/>
</dbReference>
<dbReference type="GO" id="GO:0005737">
    <property type="term" value="C:cytoplasm"/>
    <property type="evidence" value="ECO:0007669"/>
    <property type="project" value="UniProtKB-SubCell"/>
</dbReference>
<dbReference type="GO" id="GO:0003942">
    <property type="term" value="F:N-acetyl-gamma-glutamyl-phosphate reductase activity"/>
    <property type="evidence" value="ECO:0007669"/>
    <property type="project" value="UniProtKB-UniRule"/>
</dbReference>
<dbReference type="GO" id="GO:0051287">
    <property type="term" value="F:NAD binding"/>
    <property type="evidence" value="ECO:0007669"/>
    <property type="project" value="InterPro"/>
</dbReference>
<dbReference type="GO" id="GO:0070401">
    <property type="term" value="F:NADP+ binding"/>
    <property type="evidence" value="ECO:0007669"/>
    <property type="project" value="InterPro"/>
</dbReference>
<dbReference type="GO" id="GO:0006526">
    <property type="term" value="P:L-arginine biosynthetic process"/>
    <property type="evidence" value="ECO:0007669"/>
    <property type="project" value="UniProtKB-UniRule"/>
</dbReference>
<dbReference type="CDD" id="cd23934">
    <property type="entry name" value="AGPR_1_C"/>
    <property type="match status" value="1"/>
</dbReference>
<dbReference type="CDD" id="cd17895">
    <property type="entry name" value="AGPR_1_N"/>
    <property type="match status" value="1"/>
</dbReference>
<dbReference type="FunFam" id="3.30.360.10:FF:000014">
    <property type="entry name" value="N-acetyl-gamma-glutamyl-phosphate reductase"/>
    <property type="match status" value="1"/>
</dbReference>
<dbReference type="Gene3D" id="3.30.360.10">
    <property type="entry name" value="Dihydrodipicolinate Reductase, domain 2"/>
    <property type="match status" value="1"/>
</dbReference>
<dbReference type="Gene3D" id="3.40.50.720">
    <property type="entry name" value="NAD(P)-binding Rossmann-like Domain"/>
    <property type="match status" value="1"/>
</dbReference>
<dbReference type="HAMAP" id="MF_00150">
    <property type="entry name" value="ArgC_type1"/>
    <property type="match status" value="1"/>
</dbReference>
<dbReference type="InterPro" id="IPR023013">
    <property type="entry name" value="AGPR_AS"/>
</dbReference>
<dbReference type="InterPro" id="IPR000706">
    <property type="entry name" value="AGPR_type-1"/>
</dbReference>
<dbReference type="InterPro" id="IPR036291">
    <property type="entry name" value="NAD(P)-bd_dom_sf"/>
</dbReference>
<dbReference type="InterPro" id="IPR050085">
    <property type="entry name" value="NAGSA_dehydrogenase"/>
</dbReference>
<dbReference type="InterPro" id="IPR000534">
    <property type="entry name" value="Semialdehyde_DH_NAD-bd"/>
</dbReference>
<dbReference type="NCBIfam" id="TIGR01850">
    <property type="entry name" value="argC"/>
    <property type="match status" value="1"/>
</dbReference>
<dbReference type="PANTHER" id="PTHR32338:SF10">
    <property type="entry name" value="N-ACETYL-GAMMA-GLUTAMYL-PHOSPHATE REDUCTASE, CHLOROPLASTIC-RELATED"/>
    <property type="match status" value="1"/>
</dbReference>
<dbReference type="PANTHER" id="PTHR32338">
    <property type="entry name" value="N-ACETYL-GAMMA-GLUTAMYL-PHOSPHATE REDUCTASE, CHLOROPLASTIC-RELATED-RELATED"/>
    <property type="match status" value="1"/>
</dbReference>
<dbReference type="Pfam" id="PF01118">
    <property type="entry name" value="Semialdhyde_dh"/>
    <property type="match status" value="1"/>
</dbReference>
<dbReference type="Pfam" id="PF22698">
    <property type="entry name" value="Semialdhyde_dhC_1"/>
    <property type="match status" value="1"/>
</dbReference>
<dbReference type="SMART" id="SM00859">
    <property type="entry name" value="Semialdhyde_dh"/>
    <property type="match status" value="1"/>
</dbReference>
<dbReference type="SUPFAM" id="SSF55347">
    <property type="entry name" value="Glyceraldehyde-3-phosphate dehydrogenase-like, C-terminal domain"/>
    <property type="match status" value="1"/>
</dbReference>
<dbReference type="SUPFAM" id="SSF51735">
    <property type="entry name" value="NAD(P)-binding Rossmann-fold domains"/>
    <property type="match status" value="1"/>
</dbReference>
<dbReference type="PROSITE" id="PS01224">
    <property type="entry name" value="ARGC"/>
    <property type="match status" value="1"/>
</dbReference>
<evidence type="ECO:0000255" key="1">
    <source>
        <dbReference type="HAMAP-Rule" id="MF_00150"/>
    </source>
</evidence>
<name>ARGC_SHEPA</name>
<gene>
    <name evidence="1" type="primary">argC</name>
    <name type="ordered locus">Spea_0227</name>
</gene>
<protein>
    <recommendedName>
        <fullName evidence="1">N-acetyl-gamma-glutamyl-phosphate reductase</fullName>
        <shortName evidence="1">AGPR</shortName>
        <ecNumber evidence="1">1.2.1.38</ecNumber>
    </recommendedName>
    <alternativeName>
        <fullName evidence="1">N-acetyl-glutamate semialdehyde dehydrogenase</fullName>
        <shortName evidence="1">NAGSA dehydrogenase</shortName>
    </alternativeName>
</protein>
<proteinExistence type="inferred from homology"/>
<organism>
    <name type="scientific">Shewanella pealeana (strain ATCC 700345 / ANG-SQ1)</name>
    <dbReference type="NCBI Taxonomy" id="398579"/>
    <lineage>
        <taxon>Bacteria</taxon>
        <taxon>Pseudomonadati</taxon>
        <taxon>Pseudomonadota</taxon>
        <taxon>Gammaproteobacteria</taxon>
        <taxon>Alteromonadales</taxon>
        <taxon>Shewanellaceae</taxon>
        <taxon>Shewanella</taxon>
    </lineage>
</organism>